<comment type="function">
    <text evidence="1">Involved in ammonium transport.</text>
</comment>
<comment type="subcellular location">
    <subcellularLocation>
        <location evidence="3">Membrane</location>
        <topology evidence="3">Multi-pass membrane protein</topology>
    </subcellularLocation>
</comment>
<comment type="similarity">
    <text evidence="3">Belongs to the ammonia transporter channel (TC 1.A.11.2) family.</text>
</comment>
<comment type="sequence caution" evidence="3">
    <conflict type="erroneous gene model prediction">
        <sequence resource="EMBL-CDS" id="BAF13750"/>
    </conflict>
</comment>
<protein>
    <recommendedName>
        <fullName>Ammonium transporter 3 member 2</fullName>
        <shortName>OsAMT3;2</shortName>
    </recommendedName>
</protein>
<sequence length="479" mass="50853">MSSSATVVPLAYQGNTSASVADWLNKGDNAWQLVAATVVGLQSVPGLVVLYGGVVKKKWAVNSAFMALYAFAAVWICWVTWAYNMSFGEKLLPIWGKARPALDQGLLVGRAALPATVHYRADGSVETAAVEPLYPMATVVYFQCVFAAITLILVAGSLLGRMSFLAWMIFVPLWLTFSYTVGAFSLWGGGFLFHWGVIDYCGGYVIHVSAGIAGFTAAYWVGPRAQKDRERFPPNNILFTLTGAGLLWMGWAGFNGGGPYAANSVASMAVLNTNICTAMSLIVWTCLDVIFFKKPSVVGAVQGMITGLVCITPAAGVVQGWAALVMGVLAGSIPWYTMMILHKRSKILQRVDDTLGVFHTHGVAGLLGGLLTGLFAEPTLCNLFLPVADSRGAFYGGAGGAQFGKQIAGGLFVVAWNVAVTSLICLAINLLVPLRMPDDKLEVGDDAVHGEEAYALWGDGEMYDVTKHGSDAAVAPVVV</sequence>
<dbReference type="EMBL" id="AC104487">
    <property type="protein sequence ID" value="AAO41130.1"/>
    <property type="molecule type" value="Genomic_DNA"/>
</dbReference>
<dbReference type="EMBL" id="DP000009">
    <property type="protein sequence ID" value="ABF99785.1"/>
    <property type="molecule type" value="Genomic_DNA"/>
</dbReference>
<dbReference type="EMBL" id="AP008209">
    <property type="protein sequence ID" value="BAF13750.2"/>
    <property type="status" value="ALT_SEQ"/>
    <property type="molecule type" value="Genomic_DNA"/>
</dbReference>
<dbReference type="EMBL" id="AP014959">
    <property type="protein sequence ID" value="BAS87277.1"/>
    <property type="molecule type" value="Genomic_DNA"/>
</dbReference>
<dbReference type="EMBL" id="CM000140">
    <property type="protein sequence ID" value="EAZ29229.1"/>
    <property type="molecule type" value="Genomic_DNA"/>
</dbReference>
<dbReference type="EMBL" id="AK100411">
    <property type="protein sequence ID" value="BAG94591.1"/>
    <property type="molecule type" value="mRNA"/>
</dbReference>
<dbReference type="RefSeq" id="XP_015630045.1">
    <property type="nucleotide sequence ID" value="XM_015774559.1"/>
</dbReference>
<dbReference type="SMR" id="Q851M9"/>
<dbReference type="FunCoup" id="Q851M9">
    <property type="interactions" value="263"/>
</dbReference>
<dbReference type="STRING" id="39947.Q851M9"/>
<dbReference type="PaxDb" id="39947-Q851M9"/>
<dbReference type="EnsemblPlants" id="Os03t0838400-01">
    <property type="protein sequence ID" value="Os03t0838400-01"/>
    <property type="gene ID" value="Os03g0838400"/>
</dbReference>
<dbReference type="Gramene" id="Os03t0838400-01">
    <property type="protein sequence ID" value="Os03t0838400-01"/>
    <property type="gene ID" value="Os03g0838400"/>
</dbReference>
<dbReference type="KEGG" id="dosa:Os03g0838400"/>
<dbReference type="eggNOG" id="KOG0682">
    <property type="taxonomic scope" value="Eukaryota"/>
</dbReference>
<dbReference type="InParanoid" id="Q851M9"/>
<dbReference type="OMA" id="HAVWASD"/>
<dbReference type="OrthoDB" id="534912at2759"/>
<dbReference type="Proteomes" id="UP000000763">
    <property type="component" value="Chromosome 3"/>
</dbReference>
<dbReference type="Proteomes" id="UP000007752">
    <property type="component" value="Chromosome 3"/>
</dbReference>
<dbReference type="Proteomes" id="UP000059680">
    <property type="component" value="Chromosome 3"/>
</dbReference>
<dbReference type="ExpressionAtlas" id="Q851M9">
    <property type="expression patterns" value="baseline and differential"/>
</dbReference>
<dbReference type="GO" id="GO:0005886">
    <property type="term" value="C:plasma membrane"/>
    <property type="evidence" value="ECO:0000318"/>
    <property type="project" value="GO_Central"/>
</dbReference>
<dbReference type="GO" id="GO:0008519">
    <property type="term" value="F:ammonium channel activity"/>
    <property type="evidence" value="ECO:0000318"/>
    <property type="project" value="GO_Central"/>
</dbReference>
<dbReference type="GO" id="GO:0072488">
    <property type="term" value="P:ammonium transmembrane transport"/>
    <property type="evidence" value="ECO:0000318"/>
    <property type="project" value="GO_Central"/>
</dbReference>
<dbReference type="FunFam" id="1.10.3430.10:FF:000005">
    <property type="entry name" value="Ammonium transporter"/>
    <property type="match status" value="1"/>
</dbReference>
<dbReference type="Gene3D" id="1.10.3430.10">
    <property type="entry name" value="Ammonium transporter AmtB like domains"/>
    <property type="match status" value="1"/>
</dbReference>
<dbReference type="InterPro" id="IPR029020">
    <property type="entry name" value="Ammonium/urea_transptr"/>
</dbReference>
<dbReference type="InterPro" id="IPR001905">
    <property type="entry name" value="Ammonium_transpt"/>
</dbReference>
<dbReference type="InterPro" id="IPR024041">
    <property type="entry name" value="NH4_transpt_AmtB-like_dom"/>
</dbReference>
<dbReference type="InterPro" id="IPR002229">
    <property type="entry name" value="RhesusRHD"/>
</dbReference>
<dbReference type="NCBIfam" id="TIGR00836">
    <property type="entry name" value="amt"/>
    <property type="match status" value="1"/>
</dbReference>
<dbReference type="PANTHER" id="PTHR43029:SF2">
    <property type="entry name" value="AMMONIUM TRANSPORTER 3 MEMBER 2"/>
    <property type="match status" value="1"/>
</dbReference>
<dbReference type="PANTHER" id="PTHR43029">
    <property type="entry name" value="AMMONIUM TRANSPORTER MEP2"/>
    <property type="match status" value="1"/>
</dbReference>
<dbReference type="Pfam" id="PF00909">
    <property type="entry name" value="Ammonium_transp"/>
    <property type="match status" value="1"/>
</dbReference>
<dbReference type="PRINTS" id="PR00342">
    <property type="entry name" value="RHESUSRHD"/>
</dbReference>
<dbReference type="SUPFAM" id="SSF111352">
    <property type="entry name" value="Ammonium transporter"/>
    <property type="match status" value="1"/>
</dbReference>
<gene>
    <name type="primary">AMT3-2</name>
    <name type="ordered locus">Os03g0838400</name>
    <name type="ordered locus">LOC_Os03g62200</name>
    <name type="ORF">OsJ_13291</name>
    <name type="ORF">OSJNBa0042I09.15</name>
</gene>
<keyword id="KW-0924">Ammonia transport</keyword>
<keyword id="KW-0472">Membrane</keyword>
<keyword id="KW-1185">Reference proteome</keyword>
<keyword id="KW-0812">Transmembrane</keyword>
<keyword id="KW-1133">Transmembrane helix</keyword>
<keyword id="KW-0813">Transport</keyword>
<evidence type="ECO:0000250" key="1"/>
<evidence type="ECO:0000255" key="2"/>
<evidence type="ECO:0000305" key="3"/>
<feature type="chain" id="PRO_0000385651" description="Ammonium transporter 3 member 2">
    <location>
        <begin position="1"/>
        <end position="479"/>
    </location>
</feature>
<feature type="transmembrane region" description="Helical" evidence="2">
    <location>
        <begin position="34"/>
        <end position="54"/>
    </location>
</feature>
<feature type="transmembrane region" description="Helical" evidence="2">
    <location>
        <begin position="59"/>
        <end position="79"/>
    </location>
</feature>
<feature type="transmembrane region" description="Helical" evidence="2">
    <location>
        <begin position="139"/>
        <end position="159"/>
    </location>
</feature>
<feature type="transmembrane region" description="Helical" evidence="2">
    <location>
        <begin position="164"/>
        <end position="184"/>
    </location>
</feature>
<feature type="transmembrane region" description="Helical" evidence="2">
    <location>
        <begin position="202"/>
        <end position="222"/>
    </location>
</feature>
<feature type="transmembrane region" description="Helical" evidence="2">
    <location>
        <begin position="237"/>
        <end position="257"/>
    </location>
</feature>
<feature type="transmembrane region" description="Helical" evidence="2">
    <location>
        <begin position="272"/>
        <end position="292"/>
    </location>
</feature>
<feature type="transmembrane region" description="Helical" evidence="2">
    <location>
        <begin position="297"/>
        <end position="317"/>
    </location>
</feature>
<feature type="transmembrane region" description="Helical" evidence="2">
    <location>
        <begin position="321"/>
        <end position="341"/>
    </location>
</feature>
<feature type="transmembrane region" description="Helical" evidence="2">
    <location>
        <begin position="355"/>
        <end position="375"/>
    </location>
</feature>
<feature type="transmembrane region" description="Helical" evidence="2">
    <location>
        <begin position="407"/>
        <end position="427"/>
    </location>
</feature>
<organism>
    <name type="scientific">Oryza sativa subsp. japonica</name>
    <name type="common">Rice</name>
    <dbReference type="NCBI Taxonomy" id="39947"/>
    <lineage>
        <taxon>Eukaryota</taxon>
        <taxon>Viridiplantae</taxon>
        <taxon>Streptophyta</taxon>
        <taxon>Embryophyta</taxon>
        <taxon>Tracheophyta</taxon>
        <taxon>Spermatophyta</taxon>
        <taxon>Magnoliopsida</taxon>
        <taxon>Liliopsida</taxon>
        <taxon>Poales</taxon>
        <taxon>Poaceae</taxon>
        <taxon>BOP clade</taxon>
        <taxon>Oryzoideae</taxon>
        <taxon>Oryzeae</taxon>
        <taxon>Oryzinae</taxon>
        <taxon>Oryza</taxon>
        <taxon>Oryza sativa</taxon>
    </lineage>
</organism>
<proteinExistence type="evidence at transcript level"/>
<accession>Q851M9</accession>
<accession>A0A0P0W5C0</accession>
<accession>Q0DLY8</accession>
<name>AMT32_ORYSJ</name>
<reference key="1">
    <citation type="journal article" date="2005" name="Genome Res.">
        <title>Sequence, annotation, and analysis of synteny between rice chromosome 3 and diverged grass species.</title>
        <authorList>
            <consortium name="The rice chromosome 3 sequencing consortium"/>
            <person name="Buell C.R."/>
            <person name="Yuan Q."/>
            <person name="Ouyang S."/>
            <person name="Liu J."/>
            <person name="Zhu W."/>
            <person name="Wang A."/>
            <person name="Maiti R."/>
            <person name="Haas B."/>
            <person name="Wortman J."/>
            <person name="Pertea M."/>
            <person name="Jones K.M."/>
            <person name="Kim M."/>
            <person name="Overton L."/>
            <person name="Tsitrin T."/>
            <person name="Fadrosh D."/>
            <person name="Bera J."/>
            <person name="Weaver B."/>
            <person name="Jin S."/>
            <person name="Johri S."/>
            <person name="Reardon M."/>
            <person name="Webb K."/>
            <person name="Hill J."/>
            <person name="Moffat K."/>
            <person name="Tallon L."/>
            <person name="Van Aken S."/>
            <person name="Lewis M."/>
            <person name="Utterback T."/>
            <person name="Feldblyum T."/>
            <person name="Zismann V."/>
            <person name="Iobst S."/>
            <person name="Hsiao J."/>
            <person name="de Vazeille A.R."/>
            <person name="Salzberg S.L."/>
            <person name="White O."/>
            <person name="Fraser C.M."/>
            <person name="Yu Y."/>
            <person name="Kim H."/>
            <person name="Rambo T."/>
            <person name="Currie J."/>
            <person name="Collura K."/>
            <person name="Kernodle-Thompson S."/>
            <person name="Wei F."/>
            <person name="Kudrna K."/>
            <person name="Ammiraju J.S.S."/>
            <person name="Luo M."/>
            <person name="Goicoechea J.L."/>
            <person name="Wing R.A."/>
            <person name="Henry D."/>
            <person name="Oates R."/>
            <person name="Palmer M."/>
            <person name="Pries G."/>
            <person name="Saski C."/>
            <person name="Simmons J."/>
            <person name="Soderlund C."/>
            <person name="Nelson W."/>
            <person name="de la Bastide M."/>
            <person name="Spiegel L."/>
            <person name="Nascimento L."/>
            <person name="Huang E."/>
            <person name="Preston R."/>
            <person name="Zutavern T."/>
            <person name="Palmer L."/>
            <person name="O'Shaughnessy A."/>
            <person name="Dike S."/>
            <person name="McCombie W.R."/>
            <person name="Minx P."/>
            <person name="Cordum H."/>
            <person name="Wilson R."/>
            <person name="Jin W."/>
            <person name="Lee H.R."/>
            <person name="Jiang J."/>
            <person name="Jackson S."/>
        </authorList>
    </citation>
    <scope>NUCLEOTIDE SEQUENCE [LARGE SCALE GENOMIC DNA]</scope>
    <source>
        <strain>cv. Nipponbare</strain>
    </source>
</reference>
<reference key="2">
    <citation type="journal article" date="2005" name="Nature">
        <title>The map-based sequence of the rice genome.</title>
        <authorList>
            <consortium name="International rice genome sequencing project (IRGSP)"/>
        </authorList>
    </citation>
    <scope>NUCLEOTIDE SEQUENCE [LARGE SCALE GENOMIC DNA]</scope>
    <source>
        <strain>cv. Nipponbare</strain>
    </source>
</reference>
<reference key="3">
    <citation type="journal article" date="2008" name="Nucleic Acids Res.">
        <title>The rice annotation project database (RAP-DB): 2008 update.</title>
        <authorList>
            <consortium name="The rice annotation project (RAP)"/>
        </authorList>
    </citation>
    <scope>GENOME REANNOTATION</scope>
    <source>
        <strain>cv. Nipponbare</strain>
    </source>
</reference>
<reference key="4">
    <citation type="journal article" date="2013" name="Rice">
        <title>Improvement of the Oryza sativa Nipponbare reference genome using next generation sequence and optical map data.</title>
        <authorList>
            <person name="Kawahara Y."/>
            <person name="de la Bastide M."/>
            <person name="Hamilton J.P."/>
            <person name="Kanamori H."/>
            <person name="McCombie W.R."/>
            <person name="Ouyang S."/>
            <person name="Schwartz D.C."/>
            <person name="Tanaka T."/>
            <person name="Wu J."/>
            <person name="Zhou S."/>
            <person name="Childs K.L."/>
            <person name="Davidson R.M."/>
            <person name="Lin H."/>
            <person name="Quesada-Ocampo L."/>
            <person name="Vaillancourt B."/>
            <person name="Sakai H."/>
            <person name="Lee S.S."/>
            <person name="Kim J."/>
            <person name="Numa H."/>
            <person name="Itoh T."/>
            <person name="Buell C.R."/>
            <person name="Matsumoto T."/>
        </authorList>
    </citation>
    <scope>GENOME REANNOTATION</scope>
    <source>
        <strain>cv. Nipponbare</strain>
    </source>
</reference>
<reference key="5">
    <citation type="journal article" date="2005" name="PLoS Biol.">
        <title>The genomes of Oryza sativa: a history of duplications.</title>
        <authorList>
            <person name="Yu J."/>
            <person name="Wang J."/>
            <person name="Lin W."/>
            <person name="Li S."/>
            <person name="Li H."/>
            <person name="Zhou J."/>
            <person name="Ni P."/>
            <person name="Dong W."/>
            <person name="Hu S."/>
            <person name="Zeng C."/>
            <person name="Zhang J."/>
            <person name="Zhang Y."/>
            <person name="Li R."/>
            <person name="Xu Z."/>
            <person name="Li S."/>
            <person name="Li X."/>
            <person name="Zheng H."/>
            <person name="Cong L."/>
            <person name="Lin L."/>
            <person name="Yin J."/>
            <person name="Geng J."/>
            <person name="Li G."/>
            <person name="Shi J."/>
            <person name="Liu J."/>
            <person name="Lv H."/>
            <person name="Li J."/>
            <person name="Wang J."/>
            <person name="Deng Y."/>
            <person name="Ran L."/>
            <person name="Shi X."/>
            <person name="Wang X."/>
            <person name="Wu Q."/>
            <person name="Li C."/>
            <person name="Ren X."/>
            <person name="Wang J."/>
            <person name="Wang X."/>
            <person name="Li D."/>
            <person name="Liu D."/>
            <person name="Zhang X."/>
            <person name="Ji Z."/>
            <person name="Zhao W."/>
            <person name="Sun Y."/>
            <person name="Zhang Z."/>
            <person name="Bao J."/>
            <person name="Han Y."/>
            <person name="Dong L."/>
            <person name="Ji J."/>
            <person name="Chen P."/>
            <person name="Wu S."/>
            <person name="Liu J."/>
            <person name="Xiao Y."/>
            <person name="Bu D."/>
            <person name="Tan J."/>
            <person name="Yang L."/>
            <person name="Ye C."/>
            <person name="Zhang J."/>
            <person name="Xu J."/>
            <person name="Zhou Y."/>
            <person name="Yu Y."/>
            <person name="Zhang B."/>
            <person name="Zhuang S."/>
            <person name="Wei H."/>
            <person name="Liu B."/>
            <person name="Lei M."/>
            <person name="Yu H."/>
            <person name="Li Y."/>
            <person name="Xu H."/>
            <person name="Wei S."/>
            <person name="He X."/>
            <person name="Fang L."/>
            <person name="Zhang Z."/>
            <person name="Zhang Y."/>
            <person name="Huang X."/>
            <person name="Su Z."/>
            <person name="Tong W."/>
            <person name="Li J."/>
            <person name="Tong Z."/>
            <person name="Li S."/>
            <person name="Ye J."/>
            <person name="Wang L."/>
            <person name="Fang L."/>
            <person name="Lei T."/>
            <person name="Chen C.-S."/>
            <person name="Chen H.-C."/>
            <person name="Xu Z."/>
            <person name="Li H."/>
            <person name="Huang H."/>
            <person name="Zhang F."/>
            <person name="Xu H."/>
            <person name="Li N."/>
            <person name="Zhao C."/>
            <person name="Li S."/>
            <person name="Dong L."/>
            <person name="Huang Y."/>
            <person name="Li L."/>
            <person name="Xi Y."/>
            <person name="Qi Q."/>
            <person name="Li W."/>
            <person name="Zhang B."/>
            <person name="Hu W."/>
            <person name="Zhang Y."/>
            <person name="Tian X."/>
            <person name="Jiao Y."/>
            <person name="Liang X."/>
            <person name="Jin J."/>
            <person name="Gao L."/>
            <person name="Zheng W."/>
            <person name="Hao B."/>
            <person name="Liu S.-M."/>
            <person name="Wang W."/>
            <person name="Yuan L."/>
            <person name="Cao M."/>
            <person name="McDermott J."/>
            <person name="Samudrala R."/>
            <person name="Wang J."/>
            <person name="Wong G.K.-S."/>
            <person name="Yang H."/>
        </authorList>
    </citation>
    <scope>NUCLEOTIDE SEQUENCE [LARGE SCALE GENOMIC DNA]</scope>
    <source>
        <strain>cv. Nipponbare</strain>
    </source>
</reference>
<reference key="6">
    <citation type="journal article" date="2003" name="Science">
        <title>Collection, mapping, and annotation of over 28,000 cDNA clones from japonica rice.</title>
        <authorList>
            <consortium name="The rice full-length cDNA consortium"/>
        </authorList>
    </citation>
    <scope>NUCLEOTIDE SEQUENCE [LARGE SCALE MRNA]</scope>
    <source>
        <strain>cv. Nipponbare</strain>
    </source>
</reference>